<keyword id="KW-0378">Hydrolase</keyword>
<keyword id="KW-0441">Lipid A biosynthesis</keyword>
<keyword id="KW-0444">Lipid biosynthesis</keyword>
<keyword id="KW-0443">Lipid metabolism</keyword>
<keyword id="KW-0479">Metal-binding</keyword>
<keyword id="KW-1185">Reference proteome</keyword>
<keyword id="KW-0862">Zinc</keyword>
<dbReference type="EC" id="3.5.1.108" evidence="1"/>
<dbReference type="EMBL" id="CP000252">
    <property type="protein sequence ID" value="ABC78057.1"/>
    <property type="molecule type" value="Genomic_DNA"/>
</dbReference>
<dbReference type="RefSeq" id="WP_011418077.1">
    <property type="nucleotide sequence ID" value="NC_007759.1"/>
</dbReference>
<dbReference type="SMR" id="Q2LVE4"/>
<dbReference type="FunCoup" id="Q2LVE4">
    <property type="interactions" value="388"/>
</dbReference>
<dbReference type="STRING" id="56780.SYN_00756"/>
<dbReference type="KEGG" id="sat:SYN_00756"/>
<dbReference type="eggNOG" id="COG0774">
    <property type="taxonomic scope" value="Bacteria"/>
</dbReference>
<dbReference type="HOGENOM" id="CLU_046528_1_0_7"/>
<dbReference type="InParanoid" id="Q2LVE4"/>
<dbReference type="OrthoDB" id="9802746at2"/>
<dbReference type="UniPathway" id="UPA00359">
    <property type="reaction ID" value="UER00478"/>
</dbReference>
<dbReference type="Proteomes" id="UP000001933">
    <property type="component" value="Chromosome"/>
</dbReference>
<dbReference type="GO" id="GO:0016020">
    <property type="term" value="C:membrane"/>
    <property type="evidence" value="ECO:0007669"/>
    <property type="project" value="GOC"/>
</dbReference>
<dbReference type="GO" id="GO:0046872">
    <property type="term" value="F:metal ion binding"/>
    <property type="evidence" value="ECO:0007669"/>
    <property type="project" value="UniProtKB-KW"/>
</dbReference>
<dbReference type="GO" id="GO:0103117">
    <property type="term" value="F:UDP-3-O-acyl-N-acetylglucosamine deacetylase activity"/>
    <property type="evidence" value="ECO:0007669"/>
    <property type="project" value="UniProtKB-UniRule"/>
</dbReference>
<dbReference type="GO" id="GO:0009245">
    <property type="term" value="P:lipid A biosynthetic process"/>
    <property type="evidence" value="ECO:0007669"/>
    <property type="project" value="UniProtKB-UniRule"/>
</dbReference>
<dbReference type="Gene3D" id="3.30.230.20">
    <property type="entry name" value="lpxc deacetylase, domain 1"/>
    <property type="match status" value="1"/>
</dbReference>
<dbReference type="Gene3D" id="3.30.1700.10">
    <property type="entry name" value="lpxc deacetylase, domain 2"/>
    <property type="match status" value="1"/>
</dbReference>
<dbReference type="HAMAP" id="MF_00388">
    <property type="entry name" value="LpxC"/>
    <property type="match status" value="1"/>
</dbReference>
<dbReference type="InterPro" id="IPR020568">
    <property type="entry name" value="Ribosomal_Su5_D2-typ_SF"/>
</dbReference>
<dbReference type="InterPro" id="IPR004463">
    <property type="entry name" value="UDP-acyl_GlcNac_deAcase"/>
</dbReference>
<dbReference type="InterPro" id="IPR011334">
    <property type="entry name" value="UDP-acyl_GlcNac_deAcase_C"/>
</dbReference>
<dbReference type="InterPro" id="IPR015870">
    <property type="entry name" value="UDP-acyl_N-AcGlcN_deAcase_N"/>
</dbReference>
<dbReference type="NCBIfam" id="TIGR00325">
    <property type="entry name" value="lpxC"/>
    <property type="match status" value="1"/>
</dbReference>
<dbReference type="PANTHER" id="PTHR33694">
    <property type="entry name" value="UDP-3-O-ACYL-N-ACETYLGLUCOSAMINE DEACETYLASE 1, MITOCHONDRIAL-RELATED"/>
    <property type="match status" value="1"/>
</dbReference>
<dbReference type="PANTHER" id="PTHR33694:SF1">
    <property type="entry name" value="UDP-3-O-ACYL-N-ACETYLGLUCOSAMINE DEACETYLASE 1, MITOCHONDRIAL-RELATED"/>
    <property type="match status" value="1"/>
</dbReference>
<dbReference type="Pfam" id="PF03331">
    <property type="entry name" value="LpxC"/>
    <property type="match status" value="1"/>
</dbReference>
<dbReference type="SUPFAM" id="SSF54211">
    <property type="entry name" value="Ribosomal protein S5 domain 2-like"/>
    <property type="match status" value="2"/>
</dbReference>
<organism>
    <name type="scientific">Syntrophus aciditrophicus (strain SB)</name>
    <dbReference type="NCBI Taxonomy" id="56780"/>
    <lineage>
        <taxon>Bacteria</taxon>
        <taxon>Pseudomonadati</taxon>
        <taxon>Thermodesulfobacteriota</taxon>
        <taxon>Syntrophia</taxon>
        <taxon>Syntrophales</taxon>
        <taxon>Syntrophaceae</taxon>
        <taxon>Syntrophus</taxon>
    </lineage>
</organism>
<feature type="chain" id="PRO_0000253698" description="UDP-3-O-acyl-N-acetylglucosamine deacetylase">
    <location>
        <begin position="1"/>
        <end position="315"/>
    </location>
</feature>
<feature type="active site" description="Proton donor" evidence="1">
    <location>
        <position position="262"/>
    </location>
</feature>
<feature type="binding site" evidence="1">
    <location>
        <position position="78"/>
    </location>
    <ligand>
        <name>Zn(2+)</name>
        <dbReference type="ChEBI" id="CHEBI:29105"/>
    </ligand>
</feature>
<feature type="binding site" evidence="1">
    <location>
        <position position="235"/>
    </location>
    <ligand>
        <name>Zn(2+)</name>
        <dbReference type="ChEBI" id="CHEBI:29105"/>
    </ligand>
</feature>
<feature type="binding site" evidence="1">
    <location>
        <position position="239"/>
    </location>
    <ligand>
        <name>Zn(2+)</name>
        <dbReference type="ChEBI" id="CHEBI:29105"/>
    </ligand>
</feature>
<comment type="function">
    <text evidence="1">Catalyzes the hydrolysis of UDP-3-O-myristoyl-N-acetylglucosamine to form UDP-3-O-myristoylglucosamine and acetate, the committed step in lipid A biosynthesis.</text>
</comment>
<comment type="catalytic activity">
    <reaction evidence="1">
        <text>a UDP-3-O-[(3R)-3-hydroxyacyl]-N-acetyl-alpha-D-glucosamine + H2O = a UDP-3-O-[(3R)-3-hydroxyacyl]-alpha-D-glucosamine + acetate</text>
        <dbReference type="Rhea" id="RHEA:67816"/>
        <dbReference type="ChEBI" id="CHEBI:15377"/>
        <dbReference type="ChEBI" id="CHEBI:30089"/>
        <dbReference type="ChEBI" id="CHEBI:137740"/>
        <dbReference type="ChEBI" id="CHEBI:173225"/>
        <dbReference type="EC" id="3.5.1.108"/>
    </reaction>
</comment>
<comment type="cofactor">
    <cofactor evidence="1">
        <name>Zn(2+)</name>
        <dbReference type="ChEBI" id="CHEBI:29105"/>
    </cofactor>
</comment>
<comment type="pathway">
    <text evidence="1">Glycolipid biosynthesis; lipid IV(A) biosynthesis; lipid IV(A) from (3R)-3-hydroxytetradecanoyl-[acyl-carrier-protein] and UDP-N-acetyl-alpha-D-glucosamine: step 2/6.</text>
</comment>
<comment type="similarity">
    <text evidence="1">Belongs to the LpxC family.</text>
</comment>
<sequence>MYFQRTLKSDLSCQSVGLHSGRKVNMRIRPASSDEGIILVRTDTRYRQMIRVCLENVTDTTLATTIGSSGAAISTVEHILSALSGMGVDNAIIEVDAPEIPIMDGSALPFVNMLKLVGIRTQEKLKKYLVVKKPVSVSEGESFAMLAPSSSFEITYKIEFDHPLIKEQSYHLKLSDETYEKEICSSRTFGFLKDVEYLQAKGLALGGSLKNAVILDEKRIINKEGLRSHNEFVKHKILDAIGDLSLIGMPIVGHFIAYKSGHKLNSMLVKALLEQQENWTTASFLNCQDAHGQNTREKFSIRDIPARKILGAIHA</sequence>
<protein>
    <recommendedName>
        <fullName evidence="1">UDP-3-O-acyl-N-acetylglucosamine deacetylase</fullName>
        <shortName evidence="1">UDP-3-O-acyl-GlcNAc deacetylase</shortName>
        <ecNumber evidence="1">3.5.1.108</ecNumber>
    </recommendedName>
    <alternativeName>
        <fullName evidence="1">UDP-3-O-[R-3-hydroxymyristoyl]-N-acetylglucosamine deacetylase</fullName>
    </alternativeName>
</protein>
<reference key="1">
    <citation type="journal article" date="2007" name="Proc. Natl. Acad. Sci. U.S.A.">
        <title>The genome of Syntrophus aciditrophicus: life at the thermodynamic limit of microbial growth.</title>
        <authorList>
            <person name="McInerney M.J."/>
            <person name="Rohlin L."/>
            <person name="Mouttaki H."/>
            <person name="Kim U."/>
            <person name="Krupp R.S."/>
            <person name="Rios-Hernandez L."/>
            <person name="Sieber J."/>
            <person name="Struchtemeyer C.G."/>
            <person name="Bhattacharyya A."/>
            <person name="Campbell J.W."/>
            <person name="Gunsalus R.P."/>
        </authorList>
    </citation>
    <scope>NUCLEOTIDE SEQUENCE [LARGE SCALE GENOMIC DNA]</scope>
    <source>
        <strain>SB</strain>
    </source>
</reference>
<accession>Q2LVE4</accession>
<evidence type="ECO:0000255" key="1">
    <source>
        <dbReference type="HAMAP-Rule" id="MF_00388"/>
    </source>
</evidence>
<gene>
    <name evidence="1" type="primary">lpxC</name>
    <name type="ordered locus">SYNAS_21780</name>
    <name type="ORF">SYN_00756</name>
</gene>
<name>LPXC_SYNAS</name>
<proteinExistence type="inferred from homology"/>